<keyword id="KW-0044">Antibiotic</keyword>
<keyword id="KW-0929">Antimicrobial</keyword>
<keyword id="KW-0145">Chemotaxis</keyword>
<keyword id="KW-0202">Cytokine</keyword>
<keyword id="KW-0903">Direct protein sequencing</keyword>
<keyword id="KW-1015">Disulfide bond</keyword>
<keyword id="KW-1185">Reference proteome</keyword>
<keyword id="KW-0964">Secreted</keyword>
<keyword id="KW-0732">Signal</keyword>
<name>GL15L_PIG</name>
<reference key="1">
    <citation type="submission" date="2009-11" db="EMBL/GenBank/DDBJ databases">
        <authorList>
            <consortium name="Porcine genome sequencing project"/>
        </authorList>
    </citation>
    <scope>NUCLEOTIDE SEQUENCE [LARGE SCALE GENOMIC DNA]</scope>
    <source>
        <strain>Duroc</strain>
    </source>
</reference>
<reference key="2">
    <citation type="journal article" date="2017" name="Sci. Signal.">
        <title>A natural ligand for the orphan receptor GPR15 modulates lymphocyte recruitment to epithelia.</title>
        <authorList>
            <person name="Suply T."/>
            <person name="Hannedouche S."/>
            <person name="Carte N."/>
            <person name="Li J."/>
            <person name="Grosshans B."/>
            <person name="Schaefer M."/>
            <person name="Raad L."/>
            <person name="Beck V."/>
            <person name="Vidal S."/>
            <person name="Hiou-Feige A."/>
            <person name="Beluch N."/>
            <person name="Barbieri S."/>
            <person name="Wirsching J."/>
            <person name="Lageyre N."/>
            <person name="Hillger F."/>
            <person name="Debon C."/>
            <person name="Dawson J."/>
            <person name="Smith P."/>
            <person name="Lannoy V."/>
            <person name="Detheux M."/>
            <person name="Bitsch F."/>
            <person name="Falchetto R."/>
            <person name="Bouwmeester T."/>
            <person name="Porter J."/>
            <person name="Baumgarten B."/>
            <person name="Mansfield K."/>
            <person name="Carballido J.M."/>
            <person name="Seuwen K."/>
            <person name="Bassilana F."/>
        </authorList>
    </citation>
    <scope>PROTEIN SEQUENCE OF 25-81</scope>
    <scope>IDENTIFICATION BY MASS SPECTROMETRY</scope>
    <scope>DISULFIDE BOND</scope>
    <scope>FUNCTION</scope>
    <scope>SUBCELLULAR LOCATION</scope>
</reference>
<protein>
    <recommendedName>
        <fullName>Protein GPR15LG</fullName>
    </recommendedName>
    <alternativeName>
        <fullName>Protein GPR15 ligand</fullName>
    </alternativeName>
    <alternativeName>
        <fullName evidence="3">Protein GPR15L</fullName>
    </alternativeName>
</protein>
<feature type="signal peptide" evidence="2">
    <location>
        <begin position="1"/>
        <end position="24"/>
    </location>
</feature>
<feature type="chain" id="PRO_5003675598" description="Protein GPR15LG">
    <location>
        <begin position="25"/>
        <end position="81"/>
    </location>
</feature>
<feature type="disulfide bond" evidence="2">
    <location>
        <begin position="40"/>
        <end position="63"/>
    </location>
</feature>
<feature type="disulfide bond" evidence="2">
    <location>
        <begin position="41"/>
        <end position="60"/>
    </location>
</feature>
<evidence type="ECO:0000250" key="1">
    <source>
        <dbReference type="UniProtKB" id="Q6UWK7"/>
    </source>
</evidence>
<evidence type="ECO:0000269" key="2">
    <source>
    </source>
</evidence>
<evidence type="ECO:0000303" key="3">
    <source>
    </source>
</evidence>
<gene>
    <name type="primary">GPR15LG</name>
    <name evidence="3" type="synonym">GPR15L</name>
</gene>
<accession>I3LGZ3</accession>
<comment type="function">
    <text evidence="1 2">Highly cationic protein that has multiple functions. Acts as a chemotactic factor that mediates lymphocytes recruitment to epithelia through binding and activation of the G-protein coupled receptor GPR15 (PubMed:28900043). May be a tumor suppressor; together with SUSD2 has a growth inhibitory effect on colon cancer cells which includes G1 cell cycle arrest. May regulate keratinocyte proliferation. In addition, through activation of Mas-related G protein-coupled receptors (MRGPRs) contributes to pruritogenesis by activating itch-selective sensory neurons and mast cells degranulation (By similarity).</text>
</comment>
<comment type="function">
    <text evidence="1">Has antimicrobial activity against Gram-positive bacteria, including Staphylococcus aureus and Actinomyces spec., and Mycoplasma hominis and lentivirus.</text>
</comment>
<comment type="subunit">
    <text evidence="1">Interacts with SUSD2; the interaction is direct.</text>
</comment>
<comment type="subcellular location">
    <subcellularLocation>
        <location evidence="2">Secreted</location>
    </subcellularLocation>
</comment>
<sequence>MRFLALTSLLCILLLCLSFFSAEGRRHPRNPAKPGKIRICCPRLPGPDLMPQKGHHMRICRPCKFKQKPQLWVVPGALPQV</sequence>
<organism>
    <name type="scientific">Sus scrofa</name>
    <name type="common">Pig</name>
    <dbReference type="NCBI Taxonomy" id="9823"/>
    <lineage>
        <taxon>Eukaryota</taxon>
        <taxon>Metazoa</taxon>
        <taxon>Chordata</taxon>
        <taxon>Craniata</taxon>
        <taxon>Vertebrata</taxon>
        <taxon>Euteleostomi</taxon>
        <taxon>Mammalia</taxon>
        <taxon>Eutheria</taxon>
        <taxon>Laurasiatheria</taxon>
        <taxon>Artiodactyla</taxon>
        <taxon>Suina</taxon>
        <taxon>Suidae</taxon>
        <taxon>Sus</taxon>
    </lineage>
</organism>
<proteinExistence type="evidence at protein level"/>
<dbReference type="EMBL" id="CU633218">
    <property type="status" value="NOT_ANNOTATED_CDS"/>
    <property type="molecule type" value="Genomic_DNA"/>
</dbReference>
<dbReference type="RefSeq" id="NP_001230830.1">
    <property type="nucleotide sequence ID" value="NM_001243901.1"/>
</dbReference>
<dbReference type="RefSeq" id="XP_013838838.1">
    <property type="nucleotide sequence ID" value="XM_013983384.1"/>
</dbReference>
<dbReference type="FunCoup" id="I3LGZ3">
    <property type="interactions" value="127"/>
</dbReference>
<dbReference type="STRING" id="9823.ENSSSCP00000023337"/>
<dbReference type="PaxDb" id="9823-ENSSSCP00000023337"/>
<dbReference type="Ensembl" id="ENSSSCT00000027651.2">
    <property type="protein sequence ID" value="ENSSSCP00000023337.1"/>
    <property type="gene ID" value="ENSSSCG00000024634.2"/>
</dbReference>
<dbReference type="Ensembl" id="ENSSSCT00015049122.1">
    <property type="protein sequence ID" value="ENSSSCP00015019565.1"/>
    <property type="gene ID" value="ENSSSCG00015036917.1"/>
</dbReference>
<dbReference type="Ensembl" id="ENSSSCT00030024779.1">
    <property type="protein sequence ID" value="ENSSSCP00030011062.1"/>
    <property type="gene ID" value="ENSSSCG00030017955.1"/>
</dbReference>
<dbReference type="Ensembl" id="ENSSSCT00035051564.1">
    <property type="protein sequence ID" value="ENSSSCP00035020672.1"/>
    <property type="gene ID" value="ENSSSCG00035038854.1"/>
</dbReference>
<dbReference type="Ensembl" id="ENSSSCT00040072356.1">
    <property type="protein sequence ID" value="ENSSSCP00040030904.1"/>
    <property type="gene ID" value="ENSSSCG00040053543.1"/>
</dbReference>
<dbReference type="Ensembl" id="ENSSSCT00045016322.1">
    <property type="protein sequence ID" value="ENSSSCP00045011279.1"/>
    <property type="gene ID" value="ENSSSCG00045009625.1"/>
</dbReference>
<dbReference type="Ensembl" id="ENSSSCT00050014574.1">
    <property type="protein sequence ID" value="ENSSSCP00050006000.1"/>
    <property type="gene ID" value="ENSSSCG00050010836.1"/>
</dbReference>
<dbReference type="Ensembl" id="ENSSSCT00055040279.1">
    <property type="protein sequence ID" value="ENSSSCP00055032047.1"/>
    <property type="gene ID" value="ENSSSCG00055020551.1"/>
</dbReference>
<dbReference type="Ensembl" id="ENSSSCT00060082425.1">
    <property type="protein sequence ID" value="ENSSSCP00060035693.1"/>
    <property type="gene ID" value="ENSSSCG00060060432.1"/>
</dbReference>
<dbReference type="Ensembl" id="ENSSSCT00065025184.1">
    <property type="protein sequence ID" value="ENSSSCP00065010300.1"/>
    <property type="gene ID" value="ENSSSCG00065018940.1"/>
</dbReference>
<dbReference type="Ensembl" id="ENSSSCT00070000727.1">
    <property type="protein sequence ID" value="ENSSSCP00070000637.1"/>
    <property type="gene ID" value="ENSSSCG00070000399.1"/>
</dbReference>
<dbReference type="Ensembl" id="ENSSSCT00085018941">
    <property type="protein sequence ID" value="ENSSSCP00085013054"/>
    <property type="gene ID" value="ENSSSCG00085010167"/>
</dbReference>
<dbReference type="Ensembl" id="ENSSSCT00090028093">
    <property type="protein sequence ID" value="ENSSSCP00090017250"/>
    <property type="gene ID" value="ENSSSCG00090015995"/>
</dbReference>
<dbReference type="Ensembl" id="ENSSSCT00105059762">
    <property type="protein sequence ID" value="ENSSSCP00105042119"/>
    <property type="gene ID" value="ENSSSCG00105031511"/>
</dbReference>
<dbReference type="Ensembl" id="ENSSSCT00110015938">
    <property type="protein sequence ID" value="ENSSSCP00110011082"/>
    <property type="gene ID" value="ENSSSCG00110008221"/>
</dbReference>
<dbReference type="Ensembl" id="ENSSSCT00115008136">
    <property type="protein sequence ID" value="ENSSSCP00115007631"/>
    <property type="gene ID" value="ENSSSCG00115004748"/>
</dbReference>
<dbReference type="Ensembl" id="ENSSSCT00130019230">
    <property type="protein sequence ID" value="ENSSSCP00130013067"/>
    <property type="gene ID" value="ENSSSCG00130010230"/>
</dbReference>
<dbReference type="GeneID" id="100511838"/>
<dbReference type="KEGG" id="ssc:100511838"/>
<dbReference type="CTD" id="387695"/>
<dbReference type="VGNC" id="VGNC:111117">
    <property type="gene designation" value="GPR15LG"/>
</dbReference>
<dbReference type="eggNOG" id="ENOG502TD47">
    <property type="taxonomic scope" value="Eukaryota"/>
</dbReference>
<dbReference type="GeneTree" id="ENSGT00390000015172"/>
<dbReference type="HOGENOM" id="CLU_195436_0_0_1"/>
<dbReference type="InParanoid" id="I3LGZ3"/>
<dbReference type="OMA" id="RARLCCH"/>
<dbReference type="OrthoDB" id="9627112at2759"/>
<dbReference type="TreeFam" id="TF336385"/>
<dbReference type="Proteomes" id="UP000008227">
    <property type="component" value="Chromosome 14"/>
</dbReference>
<dbReference type="Proteomes" id="UP000314985">
    <property type="component" value="Chromosome 14"/>
</dbReference>
<dbReference type="Proteomes" id="UP000694570">
    <property type="component" value="Unplaced"/>
</dbReference>
<dbReference type="Proteomes" id="UP000694571">
    <property type="component" value="Unplaced"/>
</dbReference>
<dbReference type="Proteomes" id="UP000694720">
    <property type="component" value="Unplaced"/>
</dbReference>
<dbReference type="Proteomes" id="UP000694722">
    <property type="component" value="Unplaced"/>
</dbReference>
<dbReference type="Proteomes" id="UP000694723">
    <property type="component" value="Unplaced"/>
</dbReference>
<dbReference type="Proteomes" id="UP000694724">
    <property type="component" value="Unplaced"/>
</dbReference>
<dbReference type="Proteomes" id="UP000694725">
    <property type="component" value="Unplaced"/>
</dbReference>
<dbReference type="Proteomes" id="UP000694726">
    <property type="component" value="Unplaced"/>
</dbReference>
<dbReference type="Proteomes" id="UP000694727">
    <property type="component" value="Unplaced"/>
</dbReference>
<dbReference type="Proteomes" id="UP000694728">
    <property type="component" value="Unplaced"/>
</dbReference>
<dbReference type="Bgee" id="ENSSSCG00000024634">
    <property type="expression patterns" value="Expressed in penis and 23 other cell types or tissues"/>
</dbReference>
<dbReference type="GO" id="GO:0005615">
    <property type="term" value="C:extracellular space"/>
    <property type="evidence" value="ECO:0007669"/>
    <property type="project" value="UniProtKB-KW"/>
</dbReference>
<dbReference type="GO" id="GO:0008009">
    <property type="term" value="F:chemokine activity"/>
    <property type="evidence" value="ECO:0000250"/>
    <property type="project" value="UniProtKB"/>
</dbReference>
<dbReference type="GO" id="GO:0001664">
    <property type="term" value="F:G protein-coupled receptor binding"/>
    <property type="evidence" value="ECO:0000250"/>
    <property type="project" value="UniProtKB"/>
</dbReference>
<dbReference type="GO" id="GO:0048018">
    <property type="term" value="F:receptor ligand activity"/>
    <property type="evidence" value="ECO:0000250"/>
    <property type="project" value="UniProtKB"/>
</dbReference>
<dbReference type="GO" id="GO:0001525">
    <property type="term" value="P:angiogenesis"/>
    <property type="evidence" value="ECO:0000250"/>
    <property type="project" value="UniProtKB"/>
</dbReference>
<dbReference type="GO" id="GO:0050832">
    <property type="term" value="P:defense response to fungus"/>
    <property type="evidence" value="ECO:0007669"/>
    <property type="project" value="Ensembl"/>
</dbReference>
<dbReference type="GO" id="GO:0050830">
    <property type="term" value="P:defense response to Gram-positive bacterium"/>
    <property type="evidence" value="ECO:0007669"/>
    <property type="project" value="Ensembl"/>
</dbReference>
<dbReference type="GO" id="GO:0007186">
    <property type="term" value="P:G protein-coupled receptor signaling pathway"/>
    <property type="evidence" value="ECO:0000250"/>
    <property type="project" value="UniProtKB"/>
</dbReference>
<dbReference type="GO" id="GO:0048247">
    <property type="term" value="P:lymphocyte chemotaxis"/>
    <property type="evidence" value="ECO:0000250"/>
    <property type="project" value="UniProtKB"/>
</dbReference>
<dbReference type="GO" id="GO:0043303">
    <property type="term" value="P:mast cell degranulation"/>
    <property type="evidence" value="ECO:0000250"/>
    <property type="project" value="UniProtKB"/>
</dbReference>
<dbReference type="GO" id="GO:1902807">
    <property type="term" value="P:negative regulation of cell cycle G1/S phase transition"/>
    <property type="evidence" value="ECO:0007669"/>
    <property type="project" value="Ensembl"/>
</dbReference>
<dbReference type="GO" id="GO:0051782">
    <property type="term" value="P:negative regulation of cell division"/>
    <property type="evidence" value="ECO:0007669"/>
    <property type="project" value="Ensembl"/>
</dbReference>
<dbReference type="GO" id="GO:0010837">
    <property type="term" value="P:regulation of keratinocyte proliferation"/>
    <property type="evidence" value="ECO:0000250"/>
    <property type="project" value="UniProtKB"/>
</dbReference>
<dbReference type="GO" id="GO:2000404">
    <property type="term" value="P:regulation of T cell migration"/>
    <property type="evidence" value="ECO:0000250"/>
    <property type="project" value="UniProtKB"/>
</dbReference>
<dbReference type="GO" id="GO:0043029">
    <property type="term" value="P:T cell homeostasis"/>
    <property type="evidence" value="ECO:0007669"/>
    <property type="project" value="Ensembl"/>
</dbReference>
<dbReference type="InterPro" id="IPR031713">
    <property type="entry name" value="GPR15L"/>
</dbReference>
<dbReference type="Pfam" id="PF15854">
    <property type="entry name" value="GPR15L"/>
    <property type="match status" value="1"/>
</dbReference>